<sequence length="73" mass="8250">MLLVFLGPVNSFMKGIRDVGFGKPPRILSVSRARLASNTSKACPPRQLARSWRFTVISCNHFLRDLLTDRFEG</sequence>
<reference key="1">
    <citation type="journal article" date="1990" name="Curr. Top. Microbiol. Immunol.">
        <title>Analysis of the protein-coding content of the sequence of human cytomegalovirus strain AD169.</title>
        <authorList>
            <person name="Chee M.S."/>
            <person name="Bankier A.T."/>
            <person name="Beck S."/>
            <person name="Bohni R."/>
            <person name="Brown C.M."/>
            <person name="Cerny R."/>
            <person name="Horsnell T."/>
            <person name="Hutchison C.A. III"/>
            <person name="Kouzarides T."/>
            <person name="Martignetti J.A."/>
            <person name="Preddie E."/>
            <person name="Satchwell S.C."/>
            <person name="Tomlinson P."/>
            <person name="Weston K.M."/>
            <person name="Barrell B.G."/>
        </authorList>
    </citation>
    <scope>NUCLEOTIDE SEQUENCE [LARGE SCALE GENOMIC DNA]</scope>
</reference>
<gene>
    <name type="primary">UL12</name>
</gene>
<organism>
    <name type="scientific">Human cytomegalovirus (strain AD169)</name>
    <name type="common">HHV-5</name>
    <name type="synonym">Human herpesvirus 5</name>
    <dbReference type="NCBI Taxonomy" id="10360"/>
    <lineage>
        <taxon>Viruses</taxon>
        <taxon>Duplodnaviria</taxon>
        <taxon>Heunggongvirae</taxon>
        <taxon>Peploviricota</taxon>
        <taxon>Herviviricetes</taxon>
        <taxon>Herpesvirales</taxon>
        <taxon>Orthoherpesviridae</taxon>
        <taxon>Betaherpesvirinae</taxon>
        <taxon>Cytomegalovirus</taxon>
        <taxon>Cytomegalovirus humanbeta5</taxon>
        <taxon>Human cytomegalovirus</taxon>
    </lineage>
</organism>
<protein>
    <recommendedName>
        <fullName>Uncharacterized protein UL12</fullName>
    </recommendedName>
</protein>
<accession>P16777</accession>
<feature type="chain" id="PRO_0000115307" description="Uncharacterized protein UL12">
    <location>
        <begin position="1"/>
        <end position="73"/>
    </location>
</feature>
<name>UL12_HCMVA</name>
<organismHost>
    <name type="scientific">Homo sapiens</name>
    <name type="common">Human</name>
    <dbReference type="NCBI Taxonomy" id="9606"/>
</organismHost>
<proteinExistence type="predicted"/>
<dbReference type="EMBL" id="X17403">
    <property type="protein sequence ID" value="CAA35446.1"/>
    <property type="molecule type" value="Genomic_DNA"/>
</dbReference>
<dbReference type="PIR" id="S09776">
    <property type="entry name" value="S09776"/>
</dbReference>
<dbReference type="Proteomes" id="UP000008991">
    <property type="component" value="Segment"/>
</dbReference>